<name>EFG_LEUCK</name>
<protein>
    <recommendedName>
        <fullName evidence="1">Elongation factor G</fullName>
        <shortName evidence="1">EF-G</shortName>
    </recommendedName>
</protein>
<keyword id="KW-0963">Cytoplasm</keyword>
<keyword id="KW-0251">Elongation factor</keyword>
<keyword id="KW-0342">GTP-binding</keyword>
<keyword id="KW-0547">Nucleotide-binding</keyword>
<keyword id="KW-0648">Protein biosynthesis</keyword>
<keyword id="KW-1185">Reference proteome</keyword>
<evidence type="ECO:0000255" key="1">
    <source>
        <dbReference type="HAMAP-Rule" id="MF_00054"/>
    </source>
</evidence>
<reference key="1">
    <citation type="journal article" date="2008" name="J. Bacteriol.">
        <title>Complete genome sequence of Leuconostoc citreum KM20.</title>
        <authorList>
            <person name="Kim J.F."/>
            <person name="Jeong H."/>
            <person name="Lee J.-S."/>
            <person name="Choi S.-H."/>
            <person name="Ha M."/>
            <person name="Hur C.-G."/>
            <person name="Kim J.-S."/>
            <person name="Lee S."/>
            <person name="Park H.-S."/>
            <person name="Park Y.-H."/>
            <person name="Oh T.K."/>
        </authorList>
    </citation>
    <scope>NUCLEOTIDE SEQUENCE [LARGE SCALE GENOMIC DNA]</scope>
    <source>
        <strain>KM20</strain>
    </source>
</reference>
<proteinExistence type="inferred from homology"/>
<feature type="chain" id="PRO_0000335846" description="Elongation factor G">
    <location>
        <begin position="1"/>
        <end position="703"/>
    </location>
</feature>
<feature type="domain" description="tr-type G">
    <location>
        <begin position="9"/>
        <end position="292"/>
    </location>
</feature>
<feature type="binding site" evidence="1">
    <location>
        <begin position="18"/>
        <end position="25"/>
    </location>
    <ligand>
        <name>GTP</name>
        <dbReference type="ChEBI" id="CHEBI:37565"/>
    </ligand>
</feature>
<feature type="binding site" evidence="1">
    <location>
        <begin position="91"/>
        <end position="95"/>
    </location>
    <ligand>
        <name>GTP</name>
        <dbReference type="ChEBI" id="CHEBI:37565"/>
    </ligand>
</feature>
<feature type="binding site" evidence="1">
    <location>
        <begin position="145"/>
        <end position="148"/>
    </location>
    <ligand>
        <name>GTP</name>
        <dbReference type="ChEBI" id="CHEBI:37565"/>
    </ligand>
</feature>
<comment type="function">
    <text evidence="1">Catalyzes the GTP-dependent ribosomal translocation step during translation elongation. During this step, the ribosome changes from the pre-translocational (PRE) to the post-translocational (POST) state as the newly formed A-site-bound peptidyl-tRNA and P-site-bound deacylated tRNA move to the P and E sites, respectively. Catalyzes the coordinated movement of the two tRNA molecules, the mRNA and conformational changes in the ribosome.</text>
</comment>
<comment type="subcellular location">
    <subcellularLocation>
        <location evidence="1">Cytoplasm</location>
    </subcellularLocation>
</comment>
<comment type="similarity">
    <text evidence="1">Belongs to the TRAFAC class translation factor GTPase superfamily. Classic translation factor GTPase family. EF-G/EF-2 subfamily.</text>
</comment>
<gene>
    <name evidence="1" type="primary">fusA</name>
    <name type="ordered locus">LCK_01602</name>
</gene>
<accession>B1MW21</accession>
<sequence length="703" mass="77332">MAKREYPLERTRNIGIMAHIDAGKTTTTERILYYTGKIHKIGETHDGASQMDFMEQEKERGITIQSAATTAVWHGFFDQFAKTPYRVNIIDTPGHVDFTIEVERALRVLDGAVAVLDGAAGVEPQTETVWRQATTYDVPRIVFVNKMDKLGADFAMSVESMHERLQVNAEAIQWPIGAEDEFEAVIDLITQEAYYPVDDLGEKWEPREIPAELKELAEEKRNTLIEAVADVDDDLMEKYLEGEDISVEELKAAIRRATLALQFYPVLAGSAYKDKGVQMMLDAVVDYLPGPLDVKPYVANDPKTGEEIDLIADDSKSFAALAFKIMTDPFVGRLTFMRVYTGTLQSGSYVQNTSSDTRERVGRLLQMHATSRTEIDEVFSGDIAAAIGLKNTTTGDSLTAVDHQLILESMEFPEPVIELAIEPKTKADQDKLSNAIQKLAEEDPSFRATTNPETGDTLIAGMGELQLDIMVDRMRREFNVEATVGAPQVAYREAFTQTVQARGYFKRQSGGKGQYGDVYIEFSPNEEGAGFEFEDAIVGGVVPREYIPSVEAGLKDALNAGPLAGFPLVDLKAKLYDGSYHDVDSSEAAFKIAASLALKEAAKTAGAVILEPIMAVDIVAPEDNLGDVMGHVSARRGMIEGQESRGPVLAVKAKVPLSEMFGYATTLRSATQGRGTFQMVFDHYEAVPKNIQEEIIKNSGKEA</sequence>
<dbReference type="EMBL" id="DQ489736">
    <property type="protein sequence ID" value="ACA83425.1"/>
    <property type="molecule type" value="Genomic_DNA"/>
</dbReference>
<dbReference type="RefSeq" id="WP_004899474.1">
    <property type="nucleotide sequence ID" value="NC_010471.1"/>
</dbReference>
<dbReference type="SMR" id="B1MW21"/>
<dbReference type="STRING" id="349519.LCK_01602"/>
<dbReference type="KEGG" id="lci:LCK_01602"/>
<dbReference type="eggNOG" id="COG0480">
    <property type="taxonomic scope" value="Bacteria"/>
</dbReference>
<dbReference type="HOGENOM" id="CLU_002794_4_1_9"/>
<dbReference type="OrthoDB" id="9804431at2"/>
<dbReference type="Proteomes" id="UP000002166">
    <property type="component" value="Chromosome"/>
</dbReference>
<dbReference type="GO" id="GO:0005737">
    <property type="term" value="C:cytoplasm"/>
    <property type="evidence" value="ECO:0007669"/>
    <property type="project" value="UniProtKB-SubCell"/>
</dbReference>
<dbReference type="GO" id="GO:0005525">
    <property type="term" value="F:GTP binding"/>
    <property type="evidence" value="ECO:0007669"/>
    <property type="project" value="UniProtKB-UniRule"/>
</dbReference>
<dbReference type="GO" id="GO:0003924">
    <property type="term" value="F:GTPase activity"/>
    <property type="evidence" value="ECO:0007669"/>
    <property type="project" value="InterPro"/>
</dbReference>
<dbReference type="GO" id="GO:0003746">
    <property type="term" value="F:translation elongation factor activity"/>
    <property type="evidence" value="ECO:0007669"/>
    <property type="project" value="UniProtKB-UniRule"/>
</dbReference>
<dbReference type="GO" id="GO:0032790">
    <property type="term" value="P:ribosome disassembly"/>
    <property type="evidence" value="ECO:0007669"/>
    <property type="project" value="TreeGrafter"/>
</dbReference>
<dbReference type="CDD" id="cd01886">
    <property type="entry name" value="EF-G"/>
    <property type="match status" value="1"/>
</dbReference>
<dbReference type="CDD" id="cd16262">
    <property type="entry name" value="EFG_III"/>
    <property type="match status" value="1"/>
</dbReference>
<dbReference type="CDD" id="cd01434">
    <property type="entry name" value="EFG_mtEFG1_IV"/>
    <property type="match status" value="1"/>
</dbReference>
<dbReference type="CDD" id="cd03713">
    <property type="entry name" value="EFG_mtEFG_C"/>
    <property type="match status" value="1"/>
</dbReference>
<dbReference type="CDD" id="cd04088">
    <property type="entry name" value="EFG_mtEFG_II"/>
    <property type="match status" value="1"/>
</dbReference>
<dbReference type="FunFam" id="2.40.30.10:FF:000006">
    <property type="entry name" value="Elongation factor G"/>
    <property type="match status" value="1"/>
</dbReference>
<dbReference type="FunFam" id="3.30.230.10:FF:000003">
    <property type="entry name" value="Elongation factor G"/>
    <property type="match status" value="1"/>
</dbReference>
<dbReference type="FunFam" id="3.30.70.240:FF:000001">
    <property type="entry name" value="Elongation factor G"/>
    <property type="match status" value="1"/>
</dbReference>
<dbReference type="FunFam" id="3.30.70.870:FF:000001">
    <property type="entry name" value="Elongation factor G"/>
    <property type="match status" value="1"/>
</dbReference>
<dbReference type="FunFam" id="3.40.50.300:FF:000029">
    <property type="entry name" value="Elongation factor G"/>
    <property type="match status" value="1"/>
</dbReference>
<dbReference type="Gene3D" id="3.30.230.10">
    <property type="match status" value="1"/>
</dbReference>
<dbReference type="Gene3D" id="3.30.70.240">
    <property type="match status" value="1"/>
</dbReference>
<dbReference type="Gene3D" id="3.30.70.870">
    <property type="entry name" value="Elongation Factor G (Translational Gtpase), domain 3"/>
    <property type="match status" value="1"/>
</dbReference>
<dbReference type="Gene3D" id="3.40.50.300">
    <property type="entry name" value="P-loop containing nucleotide triphosphate hydrolases"/>
    <property type="match status" value="1"/>
</dbReference>
<dbReference type="Gene3D" id="2.40.30.10">
    <property type="entry name" value="Translation factors"/>
    <property type="match status" value="1"/>
</dbReference>
<dbReference type="HAMAP" id="MF_00054_B">
    <property type="entry name" value="EF_G_EF_2_B"/>
    <property type="match status" value="1"/>
</dbReference>
<dbReference type="InterPro" id="IPR053905">
    <property type="entry name" value="EF-G-like_DII"/>
</dbReference>
<dbReference type="InterPro" id="IPR041095">
    <property type="entry name" value="EFG_II"/>
</dbReference>
<dbReference type="InterPro" id="IPR009022">
    <property type="entry name" value="EFG_III"/>
</dbReference>
<dbReference type="InterPro" id="IPR035647">
    <property type="entry name" value="EFG_III/V"/>
</dbReference>
<dbReference type="InterPro" id="IPR047872">
    <property type="entry name" value="EFG_IV"/>
</dbReference>
<dbReference type="InterPro" id="IPR035649">
    <property type="entry name" value="EFG_V"/>
</dbReference>
<dbReference type="InterPro" id="IPR000640">
    <property type="entry name" value="EFG_V-like"/>
</dbReference>
<dbReference type="InterPro" id="IPR031157">
    <property type="entry name" value="G_TR_CS"/>
</dbReference>
<dbReference type="InterPro" id="IPR027417">
    <property type="entry name" value="P-loop_NTPase"/>
</dbReference>
<dbReference type="InterPro" id="IPR020568">
    <property type="entry name" value="Ribosomal_Su5_D2-typ_SF"/>
</dbReference>
<dbReference type="InterPro" id="IPR014721">
    <property type="entry name" value="Ribsml_uS5_D2-typ_fold_subgr"/>
</dbReference>
<dbReference type="InterPro" id="IPR005225">
    <property type="entry name" value="Small_GTP-bd"/>
</dbReference>
<dbReference type="InterPro" id="IPR000795">
    <property type="entry name" value="T_Tr_GTP-bd_dom"/>
</dbReference>
<dbReference type="InterPro" id="IPR009000">
    <property type="entry name" value="Transl_B-barrel_sf"/>
</dbReference>
<dbReference type="InterPro" id="IPR004540">
    <property type="entry name" value="Transl_elong_EFG/EF2"/>
</dbReference>
<dbReference type="InterPro" id="IPR005517">
    <property type="entry name" value="Transl_elong_EFG/EF2_IV"/>
</dbReference>
<dbReference type="NCBIfam" id="TIGR00484">
    <property type="entry name" value="EF-G"/>
    <property type="match status" value="1"/>
</dbReference>
<dbReference type="NCBIfam" id="NF009379">
    <property type="entry name" value="PRK12740.1-3"/>
    <property type="match status" value="1"/>
</dbReference>
<dbReference type="NCBIfam" id="NF009381">
    <property type="entry name" value="PRK12740.1-5"/>
    <property type="match status" value="1"/>
</dbReference>
<dbReference type="NCBIfam" id="TIGR00231">
    <property type="entry name" value="small_GTP"/>
    <property type="match status" value="1"/>
</dbReference>
<dbReference type="PANTHER" id="PTHR43261:SF1">
    <property type="entry name" value="RIBOSOME-RELEASING FACTOR 2, MITOCHONDRIAL"/>
    <property type="match status" value="1"/>
</dbReference>
<dbReference type="PANTHER" id="PTHR43261">
    <property type="entry name" value="TRANSLATION ELONGATION FACTOR G-RELATED"/>
    <property type="match status" value="1"/>
</dbReference>
<dbReference type="Pfam" id="PF22042">
    <property type="entry name" value="EF-G_D2"/>
    <property type="match status" value="1"/>
</dbReference>
<dbReference type="Pfam" id="PF00679">
    <property type="entry name" value="EFG_C"/>
    <property type="match status" value="1"/>
</dbReference>
<dbReference type="Pfam" id="PF14492">
    <property type="entry name" value="EFG_III"/>
    <property type="match status" value="1"/>
</dbReference>
<dbReference type="Pfam" id="PF03764">
    <property type="entry name" value="EFG_IV"/>
    <property type="match status" value="1"/>
</dbReference>
<dbReference type="Pfam" id="PF00009">
    <property type="entry name" value="GTP_EFTU"/>
    <property type="match status" value="1"/>
</dbReference>
<dbReference type="PRINTS" id="PR00315">
    <property type="entry name" value="ELONGATNFCT"/>
</dbReference>
<dbReference type="SMART" id="SM00838">
    <property type="entry name" value="EFG_C"/>
    <property type="match status" value="1"/>
</dbReference>
<dbReference type="SMART" id="SM00889">
    <property type="entry name" value="EFG_IV"/>
    <property type="match status" value="1"/>
</dbReference>
<dbReference type="SUPFAM" id="SSF54980">
    <property type="entry name" value="EF-G C-terminal domain-like"/>
    <property type="match status" value="2"/>
</dbReference>
<dbReference type="SUPFAM" id="SSF52540">
    <property type="entry name" value="P-loop containing nucleoside triphosphate hydrolases"/>
    <property type="match status" value="1"/>
</dbReference>
<dbReference type="SUPFAM" id="SSF54211">
    <property type="entry name" value="Ribosomal protein S5 domain 2-like"/>
    <property type="match status" value="1"/>
</dbReference>
<dbReference type="SUPFAM" id="SSF50447">
    <property type="entry name" value="Translation proteins"/>
    <property type="match status" value="1"/>
</dbReference>
<dbReference type="PROSITE" id="PS00301">
    <property type="entry name" value="G_TR_1"/>
    <property type="match status" value="1"/>
</dbReference>
<dbReference type="PROSITE" id="PS51722">
    <property type="entry name" value="G_TR_2"/>
    <property type="match status" value="1"/>
</dbReference>
<organism>
    <name type="scientific">Leuconostoc citreum (strain KM20)</name>
    <dbReference type="NCBI Taxonomy" id="349519"/>
    <lineage>
        <taxon>Bacteria</taxon>
        <taxon>Bacillati</taxon>
        <taxon>Bacillota</taxon>
        <taxon>Bacilli</taxon>
        <taxon>Lactobacillales</taxon>
        <taxon>Lactobacillaceae</taxon>
        <taxon>Leuconostoc</taxon>
    </lineage>
</organism>